<proteinExistence type="inferred from homology"/>
<evidence type="ECO:0000255" key="1">
    <source>
        <dbReference type="HAMAP-Rule" id="MF_01598"/>
    </source>
</evidence>
<comment type="function">
    <text evidence="1">Catalyzes the excretion of spermidine.</text>
</comment>
<comment type="subunit">
    <text evidence="1">Forms a complex with MdtI.</text>
</comment>
<comment type="subcellular location">
    <subcellularLocation>
        <location evidence="1">Cell inner membrane</location>
        <topology evidence="1">Multi-pass membrane protein</topology>
    </subcellularLocation>
</comment>
<comment type="similarity">
    <text evidence="1">Belongs to the drug/metabolite transporter (DMT) superfamily. Small multidrug resistance (SMR) (TC 2.A.7.1) family. MdtJ subfamily.</text>
</comment>
<dbReference type="EMBL" id="CP000800">
    <property type="protein sequence ID" value="ABV20220.1"/>
    <property type="molecule type" value="Genomic_DNA"/>
</dbReference>
<dbReference type="RefSeq" id="WP_000276149.1">
    <property type="nucleotide sequence ID" value="NC_009801.1"/>
</dbReference>
<dbReference type="SMR" id="A7ZM59"/>
<dbReference type="GeneID" id="93775748"/>
<dbReference type="KEGG" id="ecw:EcE24377A_1807"/>
<dbReference type="HOGENOM" id="CLU_133067_0_0_6"/>
<dbReference type="Proteomes" id="UP000001122">
    <property type="component" value="Chromosome"/>
</dbReference>
<dbReference type="GO" id="GO:0005886">
    <property type="term" value="C:plasma membrane"/>
    <property type="evidence" value="ECO:0007669"/>
    <property type="project" value="UniProtKB-SubCell"/>
</dbReference>
<dbReference type="GO" id="GO:0015199">
    <property type="term" value="F:amino-acid betaine transmembrane transporter activity"/>
    <property type="evidence" value="ECO:0007669"/>
    <property type="project" value="TreeGrafter"/>
</dbReference>
<dbReference type="GO" id="GO:0015297">
    <property type="term" value="F:antiporter activity"/>
    <property type="evidence" value="ECO:0007669"/>
    <property type="project" value="TreeGrafter"/>
</dbReference>
<dbReference type="GO" id="GO:0015220">
    <property type="term" value="F:choline transmembrane transporter activity"/>
    <property type="evidence" value="ECO:0007669"/>
    <property type="project" value="TreeGrafter"/>
</dbReference>
<dbReference type="GO" id="GO:0015606">
    <property type="term" value="F:spermidine transmembrane transporter activity"/>
    <property type="evidence" value="ECO:0007669"/>
    <property type="project" value="UniProtKB-UniRule"/>
</dbReference>
<dbReference type="GO" id="GO:0031460">
    <property type="term" value="P:glycine betaine transport"/>
    <property type="evidence" value="ECO:0007669"/>
    <property type="project" value="TreeGrafter"/>
</dbReference>
<dbReference type="FunFam" id="1.10.3730.20:FF:000001">
    <property type="entry name" value="Quaternary ammonium compound resistance transporter SugE"/>
    <property type="match status" value="1"/>
</dbReference>
<dbReference type="Gene3D" id="1.10.3730.20">
    <property type="match status" value="1"/>
</dbReference>
<dbReference type="HAMAP" id="MF_01598">
    <property type="entry name" value="MdtJ"/>
    <property type="match status" value="1"/>
</dbReference>
<dbReference type="InterPro" id="IPR000390">
    <property type="entry name" value="Small_drug/metabolite_transptr"/>
</dbReference>
<dbReference type="InterPro" id="IPR045324">
    <property type="entry name" value="Small_multidrug_res"/>
</dbReference>
<dbReference type="InterPro" id="IPR023740">
    <property type="entry name" value="Spermidine_export_MdtJ"/>
</dbReference>
<dbReference type="NCBIfam" id="NF007767">
    <property type="entry name" value="PRK10452.1"/>
    <property type="match status" value="1"/>
</dbReference>
<dbReference type="PANTHER" id="PTHR30561">
    <property type="entry name" value="SMR FAMILY PROTON-DEPENDENT DRUG EFFLUX TRANSPORTER SUGE"/>
    <property type="match status" value="1"/>
</dbReference>
<dbReference type="PANTHER" id="PTHR30561:SF2">
    <property type="entry name" value="SPERMIDINE EXPORT PROTEIN MDTJ"/>
    <property type="match status" value="1"/>
</dbReference>
<dbReference type="Pfam" id="PF00893">
    <property type="entry name" value="Multi_Drug_Res"/>
    <property type="match status" value="1"/>
</dbReference>
<dbReference type="SUPFAM" id="SSF103481">
    <property type="entry name" value="Multidrug resistance efflux transporter EmrE"/>
    <property type="match status" value="1"/>
</dbReference>
<sequence>MYIYWILLGLAIATEITGTLSMKWASVSEGNGGFILMLVMISLSYIFLSFAVKKIALGVAYALWEGIGILFITLFSVLLFDESLSLMKIAGLTTLVAGIVLIKSGTRKARKPELEVNHGAV</sequence>
<gene>
    <name evidence="1" type="primary">mdtJ</name>
    <name type="ordered locus">EcE24377A_1807</name>
</gene>
<reference key="1">
    <citation type="journal article" date="2008" name="J. Bacteriol.">
        <title>The pangenome structure of Escherichia coli: comparative genomic analysis of E. coli commensal and pathogenic isolates.</title>
        <authorList>
            <person name="Rasko D.A."/>
            <person name="Rosovitz M.J."/>
            <person name="Myers G.S.A."/>
            <person name="Mongodin E.F."/>
            <person name="Fricke W.F."/>
            <person name="Gajer P."/>
            <person name="Crabtree J."/>
            <person name="Sebaihia M."/>
            <person name="Thomson N.R."/>
            <person name="Chaudhuri R."/>
            <person name="Henderson I.R."/>
            <person name="Sperandio V."/>
            <person name="Ravel J."/>
        </authorList>
    </citation>
    <scope>NUCLEOTIDE SEQUENCE [LARGE SCALE GENOMIC DNA]</scope>
    <source>
        <strain>E24377A / ETEC</strain>
    </source>
</reference>
<protein>
    <recommendedName>
        <fullName evidence="1">Spermidine export protein MdtJ</fullName>
    </recommendedName>
</protein>
<keyword id="KW-0997">Cell inner membrane</keyword>
<keyword id="KW-1003">Cell membrane</keyword>
<keyword id="KW-0472">Membrane</keyword>
<keyword id="KW-1185">Reference proteome</keyword>
<keyword id="KW-0812">Transmembrane</keyword>
<keyword id="KW-1133">Transmembrane helix</keyword>
<keyword id="KW-0813">Transport</keyword>
<organism>
    <name type="scientific">Escherichia coli O139:H28 (strain E24377A / ETEC)</name>
    <dbReference type="NCBI Taxonomy" id="331111"/>
    <lineage>
        <taxon>Bacteria</taxon>
        <taxon>Pseudomonadati</taxon>
        <taxon>Pseudomonadota</taxon>
        <taxon>Gammaproteobacteria</taxon>
        <taxon>Enterobacterales</taxon>
        <taxon>Enterobacteriaceae</taxon>
        <taxon>Escherichia</taxon>
    </lineage>
</organism>
<name>MDTJ_ECO24</name>
<feature type="chain" id="PRO_0000331167" description="Spermidine export protein MdtJ">
    <location>
        <begin position="1"/>
        <end position="121"/>
    </location>
</feature>
<feature type="transmembrane region" description="Helical" evidence="1">
    <location>
        <begin position="1"/>
        <end position="21"/>
    </location>
</feature>
<feature type="transmembrane region" description="Helical" evidence="1">
    <location>
        <begin position="32"/>
        <end position="52"/>
    </location>
</feature>
<feature type="transmembrane region" description="Helical" evidence="1">
    <location>
        <begin position="55"/>
        <end position="75"/>
    </location>
</feature>
<feature type="transmembrane region" description="Helical" evidence="1">
    <location>
        <begin position="82"/>
        <end position="102"/>
    </location>
</feature>
<accession>A7ZM59</accession>